<accession>Q6C9G2</accession>
<feature type="chain" id="PRO_0000056633" description="Protein BFR2">
    <location>
        <begin position="1"/>
        <end position="495"/>
    </location>
</feature>
<feature type="region of interest" description="Disordered" evidence="2">
    <location>
        <begin position="10"/>
        <end position="155"/>
    </location>
</feature>
<feature type="region of interest" description="Disordered" evidence="2">
    <location>
        <begin position="462"/>
        <end position="495"/>
    </location>
</feature>
<feature type="compositionally biased region" description="Acidic residues" evidence="2">
    <location>
        <begin position="23"/>
        <end position="45"/>
    </location>
</feature>
<feature type="compositionally biased region" description="Basic and acidic residues" evidence="2">
    <location>
        <begin position="46"/>
        <end position="62"/>
    </location>
</feature>
<feature type="compositionally biased region" description="Acidic residues" evidence="2">
    <location>
        <begin position="81"/>
        <end position="151"/>
    </location>
</feature>
<reference key="1">
    <citation type="journal article" date="2004" name="Nature">
        <title>Genome evolution in yeasts.</title>
        <authorList>
            <person name="Dujon B."/>
            <person name="Sherman D."/>
            <person name="Fischer G."/>
            <person name="Durrens P."/>
            <person name="Casaregola S."/>
            <person name="Lafontaine I."/>
            <person name="de Montigny J."/>
            <person name="Marck C."/>
            <person name="Neuveglise C."/>
            <person name="Talla E."/>
            <person name="Goffard N."/>
            <person name="Frangeul L."/>
            <person name="Aigle M."/>
            <person name="Anthouard V."/>
            <person name="Babour A."/>
            <person name="Barbe V."/>
            <person name="Barnay S."/>
            <person name="Blanchin S."/>
            <person name="Beckerich J.-M."/>
            <person name="Beyne E."/>
            <person name="Bleykasten C."/>
            <person name="Boisrame A."/>
            <person name="Boyer J."/>
            <person name="Cattolico L."/>
            <person name="Confanioleri F."/>
            <person name="de Daruvar A."/>
            <person name="Despons L."/>
            <person name="Fabre E."/>
            <person name="Fairhead C."/>
            <person name="Ferry-Dumazet H."/>
            <person name="Groppi A."/>
            <person name="Hantraye F."/>
            <person name="Hennequin C."/>
            <person name="Jauniaux N."/>
            <person name="Joyet P."/>
            <person name="Kachouri R."/>
            <person name="Kerrest A."/>
            <person name="Koszul R."/>
            <person name="Lemaire M."/>
            <person name="Lesur I."/>
            <person name="Ma L."/>
            <person name="Muller H."/>
            <person name="Nicaud J.-M."/>
            <person name="Nikolski M."/>
            <person name="Oztas S."/>
            <person name="Ozier-Kalogeropoulos O."/>
            <person name="Pellenz S."/>
            <person name="Potier S."/>
            <person name="Richard G.-F."/>
            <person name="Straub M.-L."/>
            <person name="Suleau A."/>
            <person name="Swennen D."/>
            <person name="Tekaia F."/>
            <person name="Wesolowski-Louvel M."/>
            <person name="Westhof E."/>
            <person name="Wirth B."/>
            <person name="Zeniou-Meyer M."/>
            <person name="Zivanovic Y."/>
            <person name="Bolotin-Fukuhara M."/>
            <person name="Thierry A."/>
            <person name="Bouchier C."/>
            <person name="Caudron B."/>
            <person name="Scarpelli C."/>
            <person name="Gaillardin C."/>
            <person name="Weissenbach J."/>
            <person name="Wincker P."/>
            <person name="Souciet J.-L."/>
        </authorList>
    </citation>
    <scope>NUCLEOTIDE SEQUENCE [LARGE SCALE GENOMIC DNA]</scope>
    <source>
        <strain>CLIB 122 / E 150</strain>
    </source>
</reference>
<gene>
    <name type="primary">BFR2</name>
    <name type="ordered locus">YALI0D11462g</name>
</gene>
<comment type="subcellular location">
    <subcellularLocation>
        <location evidence="1">Nucleus</location>
        <location evidence="1">Nucleolus</location>
    </subcellularLocation>
</comment>
<comment type="similarity">
    <text evidence="3">Belongs to the AATF family.</text>
</comment>
<sequence>MAKLSLAEQISQLANPKPKDVDIENFEDRDDGSESGGDVDYDSDLATEHYVKVGKSKLRDDAPALNPKYKAGKVSRKALYDDEDEDGDGADGFIDEDDEDDEEDDEEGEGNGFIDDEVEVDEEDQDEDGDEDMEDEQDEDESDEELSENENDSSARATLKELLREEKKASKQQAKEAIVSDAQKGFAIHKQTDLYETLLDARITFQKAVQSANALPISDTKAEELGEDITNTLQDTKAKLSDFISQIAKMRHNMAVQDNVFAADSVKLSTKRTFDATLDNMDKLDTEFKAYETSVLSKWSQKVQASSAASALNSSKFKALNQSSANQVAATLADMDRLVKRTRMNRSNVVILGEEQMGAIQDAEGENYYIFDDSDFYRNLLKDLIDRRMVDSGSQSSGVKTWTATKAKTKKNVDTRASKGRKLRYHVQDKVQNFAAPRPVFTWEDDQIDELFAGLLGQRVNFNEDDDGEEKEKEEKEEKEEQELVIPDDGLRIFG</sequence>
<evidence type="ECO:0000250" key="1"/>
<evidence type="ECO:0000256" key="2">
    <source>
        <dbReference type="SAM" id="MobiDB-lite"/>
    </source>
</evidence>
<evidence type="ECO:0000305" key="3"/>
<organism>
    <name type="scientific">Yarrowia lipolytica (strain CLIB 122 / E 150)</name>
    <name type="common">Yeast</name>
    <name type="synonym">Candida lipolytica</name>
    <dbReference type="NCBI Taxonomy" id="284591"/>
    <lineage>
        <taxon>Eukaryota</taxon>
        <taxon>Fungi</taxon>
        <taxon>Dikarya</taxon>
        <taxon>Ascomycota</taxon>
        <taxon>Saccharomycotina</taxon>
        <taxon>Dipodascomycetes</taxon>
        <taxon>Dipodascales</taxon>
        <taxon>Dipodascales incertae sedis</taxon>
        <taxon>Yarrowia</taxon>
    </lineage>
</organism>
<dbReference type="EMBL" id="CR382130">
    <property type="protein sequence ID" value="CAG80888.1"/>
    <property type="molecule type" value="Genomic_DNA"/>
</dbReference>
<dbReference type="RefSeq" id="XP_502700.1">
    <property type="nucleotide sequence ID" value="XM_502700.1"/>
</dbReference>
<dbReference type="SMR" id="Q6C9G2"/>
<dbReference type="FunCoup" id="Q6C9G2">
    <property type="interactions" value="950"/>
</dbReference>
<dbReference type="STRING" id="284591.Q6C9G2"/>
<dbReference type="EnsemblFungi" id="CAG80888">
    <property type="protein sequence ID" value="CAG80888"/>
    <property type="gene ID" value="YALI0_D11462g"/>
</dbReference>
<dbReference type="KEGG" id="yli:2910354"/>
<dbReference type="VEuPathDB" id="FungiDB:YALI0_D11462g"/>
<dbReference type="HOGENOM" id="CLU_018299_2_1_1"/>
<dbReference type="InParanoid" id="Q6C9G2"/>
<dbReference type="OMA" id="INFMAPN"/>
<dbReference type="OrthoDB" id="3359at4891"/>
<dbReference type="Proteomes" id="UP000001300">
    <property type="component" value="Chromosome D"/>
</dbReference>
<dbReference type="GO" id="GO:0005730">
    <property type="term" value="C:nucleolus"/>
    <property type="evidence" value="ECO:0000318"/>
    <property type="project" value="GO_Central"/>
</dbReference>
<dbReference type="GO" id="GO:0000462">
    <property type="term" value="P:maturation of SSU-rRNA from tricistronic rRNA transcript (SSU-rRNA, 5.8S rRNA, LSU-rRNA)"/>
    <property type="evidence" value="ECO:0000318"/>
    <property type="project" value="GO_Central"/>
</dbReference>
<dbReference type="InterPro" id="IPR025160">
    <property type="entry name" value="AATF"/>
</dbReference>
<dbReference type="InterPro" id="IPR039223">
    <property type="entry name" value="AATF/Bfr2"/>
</dbReference>
<dbReference type="InterPro" id="IPR012617">
    <property type="entry name" value="AATF_C"/>
</dbReference>
<dbReference type="PANTHER" id="PTHR15565">
    <property type="entry name" value="AATF PROTEIN APOPTOSIS ANTAGONIZING TRANSCRIPTION FACTOR"/>
    <property type="match status" value="1"/>
</dbReference>
<dbReference type="PANTHER" id="PTHR15565:SF0">
    <property type="entry name" value="PROTEIN AATF"/>
    <property type="match status" value="1"/>
</dbReference>
<dbReference type="Pfam" id="PF13339">
    <property type="entry name" value="AATF-Che1"/>
    <property type="match status" value="1"/>
</dbReference>
<dbReference type="Pfam" id="PF08164">
    <property type="entry name" value="TRAUB"/>
    <property type="match status" value="1"/>
</dbReference>
<keyword id="KW-0539">Nucleus</keyword>
<keyword id="KW-1185">Reference proteome</keyword>
<protein>
    <recommendedName>
        <fullName>Protein BFR2</fullName>
    </recommendedName>
</protein>
<proteinExistence type="inferred from homology"/>
<name>BFR2_YARLI</name>